<comment type="function">
    <text evidence="1">Catalyzes the conversion of D-ribulose 5-phosphate to formate and 3,4-dihydroxy-2-butanone 4-phosphate.</text>
</comment>
<comment type="catalytic activity">
    <reaction evidence="1">
        <text>D-ribulose 5-phosphate = (2S)-2-hydroxy-3-oxobutyl phosphate + formate + H(+)</text>
        <dbReference type="Rhea" id="RHEA:18457"/>
        <dbReference type="ChEBI" id="CHEBI:15378"/>
        <dbReference type="ChEBI" id="CHEBI:15740"/>
        <dbReference type="ChEBI" id="CHEBI:58121"/>
        <dbReference type="ChEBI" id="CHEBI:58830"/>
        <dbReference type="EC" id="4.1.99.12"/>
    </reaction>
</comment>
<comment type="cofactor">
    <cofactor evidence="1">
        <name>Mg(2+)</name>
        <dbReference type="ChEBI" id="CHEBI:18420"/>
    </cofactor>
    <cofactor evidence="1">
        <name>Mn(2+)</name>
        <dbReference type="ChEBI" id="CHEBI:29035"/>
    </cofactor>
    <text evidence="1">Binds 2 divalent metal cations per subunit. Magnesium or manganese.</text>
</comment>
<comment type="pathway">
    <text evidence="1">Cofactor biosynthesis; riboflavin biosynthesis; 2-hydroxy-3-oxobutyl phosphate from D-ribulose 5-phosphate: step 1/1.</text>
</comment>
<comment type="subunit">
    <text evidence="1">Homodimer.</text>
</comment>
<comment type="similarity">
    <text evidence="1">Belongs to the DHBP synthase family.</text>
</comment>
<organism>
    <name type="scientific">Agrobacterium fabrum (strain C58 / ATCC 33970)</name>
    <name type="common">Agrobacterium tumefaciens (strain C58)</name>
    <dbReference type="NCBI Taxonomy" id="176299"/>
    <lineage>
        <taxon>Bacteria</taxon>
        <taxon>Pseudomonadati</taxon>
        <taxon>Pseudomonadota</taxon>
        <taxon>Alphaproteobacteria</taxon>
        <taxon>Hyphomicrobiales</taxon>
        <taxon>Rhizobiaceae</taxon>
        <taxon>Rhizobium/Agrobacterium group</taxon>
        <taxon>Agrobacterium</taxon>
        <taxon>Agrobacterium tumefaciens complex</taxon>
    </lineage>
</organism>
<accession>Q8UE66</accession>
<evidence type="ECO:0000255" key="1">
    <source>
        <dbReference type="HAMAP-Rule" id="MF_00180"/>
    </source>
</evidence>
<protein>
    <recommendedName>
        <fullName evidence="1">3,4-dihydroxy-2-butanone 4-phosphate synthase</fullName>
        <shortName evidence="1">DHBP synthase</shortName>
        <ecNumber evidence="1">4.1.99.12</ecNumber>
    </recommendedName>
</protein>
<sequence>MTIAKIEDAIEAISRGEMVIVVDDEDRENEGDIIAASDSITPQQIAFMMNHARGLVCVAMPGERLDALDIPLMVSRNTESLKTAFTVSVDYIPGTTTGISAADRAKTVRALVSEGSRPEDFARPGHIFPLRANPEGVLGRTGHTEAAVDLCRLAGKFPSGTICEVANDDGTMARLPQLEIFAERHGLLVVTIKDLVSYLKGEVVEEMVQKQVA</sequence>
<gene>
    <name evidence="1" type="primary">ribB</name>
    <name type="ordered locus">Atu1895</name>
    <name type="ORF">AGR_C_3478</name>
</gene>
<reference key="1">
    <citation type="journal article" date="2001" name="Science">
        <title>The genome of the natural genetic engineer Agrobacterium tumefaciens C58.</title>
        <authorList>
            <person name="Wood D.W."/>
            <person name="Setubal J.C."/>
            <person name="Kaul R."/>
            <person name="Monks D.E."/>
            <person name="Kitajima J.P."/>
            <person name="Okura V.K."/>
            <person name="Zhou Y."/>
            <person name="Chen L."/>
            <person name="Wood G.E."/>
            <person name="Almeida N.F. Jr."/>
            <person name="Woo L."/>
            <person name="Chen Y."/>
            <person name="Paulsen I.T."/>
            <person name="Eisen J.A."/>
            <person name="Karp P.D."/>
            <person name="Bovee D. Sr."/>
            <person name="Chapman P."/>
            <person name="Clendenning J."/>
            <person name="Deatherage G."/>
            <person name="Gillet W."/>
            <person name="Grant C."/>
            <person name="Kutyavin T."/>
            <person name="Levy R."/>
            <person name="Li M.-J."/>
            <person name="McClelland E."/>
            <person name="Palmieri A."/>
            <person name="Raymond C."/>
            <person name="Rouse G."/>
            <person name="Saenphimmachak C."/>
            <person name="Wu Z."/>
            <person name="Romero P."/>
            <person name="Gordon D."/>
            <person name="Zhang S."/>
            <person name="Yoo H."/>
            <person name="Tao Y."/>
            <person name="Biddle P."/>
            <person name="Jung M."/>
            <person name="Krespan W."/>
            <person name="Perry M."/>
            <person name="Gordon-Kamm B."/>
            <person name="Liao L."/>
            <person name="Kim S."/>
            <person name="Hendrick C."/>
            <person name="Zhao Z.-Y."/>
            <person name="Dolan M."/>
            <person name="Chumley F."/>
            <person name="Tingey S.V."/>
            <person name="Tomb J.-F."/>
            <person name="Gordon M.P."/>
            <person name="Olson M.V."/>
            <person name="Nester E.W."/>
        </authorList>
    </citation>
    <scope>NUCLEOTIDE SEQUENCE [LARGE SCALE GENOMIC DNA]</scope>
    <source>
        <strain>C58 / ATCC 33970</strain>
    </source>
</reference>
<reference key="2">
    <citation type="journal article" date="2001" name="Science">
        <title>Genome sequence of the plant pathogen and biotechnology agent Agrobacterium tumefaciens C58.</title>
        <authorList>
            <person name="Goodner B."/>
            <person name="Hinkle G."/>
            <person name="Gattung S."/>
            <person name="Miller N."/>
            <person name="Blanchard M."/>
            <person name="Qurollo B."/>
            <person name="Goldman B.S."/>
            <person name="Cao Y."/>
            <person name="Askenazi M."/>
            <person name="Halling C."/>
            <person name="Mullin L."/>
            <person name="Houmiel K."/>
            <person name="Gordon J."/>
            <person name="Vaudin M."/>
            <person name="Iartchouk O."/>
            <person name="Epp A."/>
            <person name="Liu F."/>
            <person name="Wollam C."/>
            <person name="Allinger M."/>
            <person name="Doughty D."/>
            <person name="Scott C."/>
            <person name="Lappas C."/>
            <person name="Markelz B."/>
            <person name="Flanagan C."/>
            <person name="Crowell C."/>
            <person name="Gurson J."/>
            <person name="Lomo C."/>
            <person name="Sear C."/>
            <person name="Strub G."/>
            <person name="Cielo C."/>
            <person name="Slater S."/>
        </authorList>
    </citation>
    <scope>NUCLEOTIDE SEQUENCE [LARGE SCALE GENOMIC DNA]</scope>
    <source>
        <strain>C58 / ATCC 33970</strain>
    </source>
</reference>
<dbReference type="EC" id="4.1.99.12" evidence="1"/>
<dbReference type="EMBL" id="AE007869">
    <property type="protein sequence ID" value="AAK87658.1"/>
    <property type="molecule type" value="Genomic_DNA"/>
</dbReference>
<dbReference type="PIR" id="A97588">
    <property type="entry name" value="A97588"/>
</dbReference>
<dbReference type="PIR" id="AE2809">
    <property type="entry name" value="AE2809"/>
</dbReference>
<dbReference type="RefSeq" id="NP_354873.1">
    <property type="nucleotide sequence ID" value="NC_003062.2"/>
</dbReference>
<dbReference type="RefSeq" id="WP_006314017.1">
    <property type="nucleotide sequence ID" value="NC_003062.2"/>
</dbReference>
<dbReference type="SMR" id="Q8UE66"/>
<dbReference type="STRING" id="176299.Atu1895"/>
<dbReference type="EnsemblBacteria" id="AAK87658">
    <property type="protein sequence ID" value="AAK87658"/>
    <property type="gene ID" value="Atu1895"/>
</dbReference>
<dbReference type="GeneID" id="1133933"/>
<dbReference type="KEGG" id="atu:Atu1895"/>
<dbReference type="PATRIC" id="fig|176299.10.peg.1908"/>
<dbReference type="eggNOG" id="COG0108">
    <property type="taxonomic scope" value="Bacteria"/>
</dbReference>
<dbReference type="HOGENOM" id="CLU_020273_3_0_5"/>
<dbReference type="OrthoDB" id="9793111at2"/>
<dbReference type="PhylomeDB" id="Q8UE66"/>
<dbReference type="BioCyc" id="AGRO:ATU1895-MONOMER"/>
<dbReference type="UniPathway" id="UPA00275">
    <property type="reaction ID" value="UER00399"/>
</dbReference>
<dbReference type="Proteomes" id="UP000000813">
    <property type="component" value="Chromosome circular"/>
</dbReference>
<dbReference type="GO" id="GO:0005829">
    <property type="term" value="C:cytosol"/>
    <property type="evidence" value="ECO:0007669"/>
    <property type="project" value="TreeGrafter"/>
</dbReference>
<dbReference type="GO" id="GO:0008686">
    <property type="term" value="F:3,4-dihydroxy-2-butanone-4-phosphate synthase activity"/>
    <property type="evidence" value="ECO:0007669"/>
    <property type="project" value="UniProtKB-UniRule"/>
</dbReference>
<dbReference type="GO" id="GO:0000287">
    <property type="term" value="F:magnesium ion binding"/>
    <property type="evidence" value="ECO:0007669"/>
    <property type="project" value="UniProtKB-UniRule"/>
</dbReference>
<dbReference type="GO" id="GO:0030145">
    <property type="term" value="F:manganese ion binding"/>
    <property type="evidence" value="ECO:0007669"/>
    <property type="project" value="UniProtKB-UniRule"/>
</dbReference>
<dbReference type="GO" id="GO:0009231">
    <property type="term" value="P:riboflavin biosynthetic process"/>
    <property type="evidence" value="ECO:0007669"/>
    <property type="project" value="UniProtKB-UniRule"/>
</dbReference>
<dbReference type="FunFam" id="3.90.870.10:FF:000001">
    <property type="entry name" value="Riboflavin biosynthesis protein RibBA"/>
    <property type="match status" value="1"/>
</dbReference>
<dbReference type="Gene3D" id="3.90.870.10">
    <property type="entry name" value="DHBP synthase"/>
    <property type="match status" value="1"/>
</dbReference>
<dbReference type="HAMAP" id="MF_00180">
    <property type="entry name" value="RibB"/>
    <property type="match status" value="1"/>
</dbReference>
<dbReference type="InterPro" id="IPR017945">
    <property type="entry name" value="DHBP_synth_RibB-like_a/b_dom"/>
</dbReference>
<dbReference type="InterPro" id="IPR000422">
    <property type="entry name" value="DHBP_synthase_RibB"/>
</dbReference>
<dbReference type="NCBIfam" id="TIGR00506">
    <property type="entry name" value="ribB"/>
    <property type="match status" value="1"/>
</dbReference>
<dbReference type="PANTHER" id="PTHR21327:SF18">
    <property type="entry name" value="3,4-DIHYDROXY-2-BUTANONE 4-PHOSPHATE SYNTHASE"/>
    <property type="match status" value="1"/>
</dbReference>
<dbReference type="PANTHER" id="PTHR21327">
    <property type="entry name" value="GTP CYCLOHYDROLASE II-RELATED"/>
    <property type="match status" value="1"/>
</dbReference>
<dbReference type="Pfam" id="PF00926">
    <property type="entry name" value="DHBP_synthase"/>
    <property type="match status" value="1"/>
</dbReference>
<dbReference type="SUPFAM" id="SSF55821">
    <property type="entry name" value="YrdC/RibB"/>
    <property type="match status" value="1"/>
</dbReference>
<keyword id="KW-0456">Lyase</keyword>
<keyword id="KW-0460">Magnesium</keyword>
<keyword id="KW-0464">Manganese</keyword>
<keyword id="KW-0479">Metal-binding</keyword>
<keyword id="KW-1185">Reference proteome</keyword>
<keyword id="KW-0686">Riboflavin biosynthesis</keyword>
<proteinExistence type="inferred from homology"/>
<name>RIBB_AGRFC</name>
<feature type="chain" id="PRO_0000151787" description="3,4-dihydroxy-2-butanone 4-phosphate synthase">
    <location>
        <begin position="1"/>
        <end position="213"/>
    </location>
</feature>
<feature type="binding site" evidence="1">
    <location>
        <begin position="27"/>
        <end position="28"/>
    </location>
    <ligand>
        <name>D-ribulose 5-phosphate</name>
        <dbReference type="ChEBI" id="CHEBI:58121"/>
    </ligand>
</feature>
<feature type="binding site" evidence="1">
    <location>
        <position position="28"/>
    </location>
    <ligand>
        <name>Mg(2+)</name>
        <dbReference type="ChEBI" id="CHEBI:18420"/>
        <label>1</label>
    </ligand>
</feature>
<feature type="binding site" evidence="1">
    <location>
        <position position="28"/>
    </location>
    <ligand>
        <name>Mg(2+)</name>
        <dbReference type="ChEBI" id="CHEBI:18420"/>
        <label>2</label>
    </ligand>
</feature>
<feature type="binding site" evidence="1">
    <location>
        <position position="32"/>
    </location>
    <ligand>
        <name>D-ribulose 5-phosphate</name>
        <dbReference type="ChEBI" id="CHEBI:58121"/>
    </ligand>
</feature>
<feature type="binding site" evidence="1">
    <location>
        <begin position="140"/>
        <end position="144"/>
    </location>
    <ligand>
        <name>D-ribulose 5-phosphate</name>
        <dbReference type="ChEBI" id="CHEBI:58121"/>
    </ligand>
</feature>
<feature type="binding site" evidence="1">
    <location>
        <position position="143"/>
    </location>
    <ligand>
        <name>Mg(2+)</name>
        <dbReference type="ChEBI" id="CHEBI:18420"/>
        <label>2</label>
    </ligand>
</feature>
<feature type="binding site" evidence="1">
    <location>
        <position position="164"/>
    </location>
    <ligand>
        <name>D-ribulose 5-phosphate</name>
        <dbReference type="ChEBI" id="CHEBI:58121"/>
    </ligand>
</feature>
<feature type="site" description="Essential for catalytic activity" evidence="1">
    <location>
        <position position="126"/>
    </location>
</feature>
<feature type="site" description="Essential for catalytic activity" evidence="1">
    <location>
        <position position="164"/>
    </location>
</feature>